<gene>
    <name evidence="1" type="primary">frdC</name>
    <name type="ordered locus">YpAngola_A0716</name>
</gene>
<proteinExistence type="inferred from homology"/>
<dbReference type="EMBL" id="CP000901">
    <property type="protein sequence ID" value="ABX88314.1"/>
    <property type="molecule type" value="Genomic_DNA"/>
</dbReference>
<dbReference type="RefSeq" id="WP_012229099.1">
    <property type="nucleotide sequence ID" value="NC_010159.1"/>
</dbReference>
<dbReference type="SMR" id="A9QYP6"/>
<dbReference type="KEGG" id="ypg:YpAngola_A0716"/>
<dbReference type="PATRIC" id="fig|349746.12.peg.1663"/>
<dbReference type="GO" id="GO:0045283">
    <property type="term" value="C:fumarate reductase complex"/>
    <property type="evidence" value="ECO:0007669"/>
    <property type="project" value="UniProtKB-UniRule"/>
</dbReference>
<dbReference type="GO" id="GO:0005886">
    <property type="term" value="C:plasma membrane"/>
    <property type="evidence" value="ECO:0007669"/>
    <property type="project" value="UniProtKB-SubCell"/>
</dbReference>
<dbReference type="GO" id="GO:0000104">
    <property type="term" value="F:succinate dehydrogenase activity"/>
    <property type="evidence" value="ECO:0007669"/>
    <property type="project" value="UniProtKB-UniRule"/>
</dbReference>
<dbReference type="CDD" id="cd00546">
    <property type="entry name" value="QFR_TypeD_subunitC"/>
    <property type="match status" value="1"/>
</dbReference>
<dbReference type="Gene3D" id="1.20.1300.10">
    <property type="entry name" value="Fumarate reductase/succinate dehydrogenase, transmembrane subunit"/>
    <property type="match status" value="1"/>
</dbReference>
<dbReference type="HAMAP" id="MF_00708">
    <property type="entry name" value="Fumarate_red_C"/>
    <property type="match status" value="1"/>
</dbReference>
<dbReference type="InterPro" id="IPR003510">
    <property type="entry name" value="Fumarate_red_C"/>
</dbReference>
<dbReference type="InterPro" id="IPR034804">
    <property type="entry name" value="SQR/QFR_C/D"/>
</dbReference>
<dbReference type="NCBIfam" id="NF003445">
    <property type="entry name" value="PRK04987.1"/>
    <property type="match status" value="1"/>
</dbReference>
<dbReference type="Pfam" id="PF02300">
    <property type="entry name" value="Fumarate_red_C"/>
    <property type="match status" value="1"/>
</dbReference>
<dbReference type="PIRSF" id="PIRSF000180">
    <property type="entry name" value="FrdC"/>
    <property type="match status" value="1"/>
</dbReference>
<dbReference type="SUPFAM" id="SSF81343">
    <property type="entry name" value="Fumarate reductase respiratory complex transmembrane subunits"/>
    <property type="match status" value="1"/>
</dbReference>
<sequence>MTTKRKAYVRTMAPNWWQQLGFYRFYMLREGTSIPAVWFSVLLIYGVFSLKSGPAGWEGFVSFLQNPLVLFLNILTLFAALLHTKTWFELAPKAVNIIVKSEKMGPEPMIKALWVVTVVASAIILAVALL</sequence>
<feature type="chain" id="PRO_1000132391" description="Fumarate reductase subunit C">
    <location>
        <begin position="1"/>
        <end position="130"/>
    </location>
</feature>
<feature type="transmembrane region" description="Helical" evidence="1">
    <location>
        <begin position="30"/>
        <end position="50"/>
    </location>
</feature>
<feature type="transmembrane region" description="Helical" evidence="1">
    <location>
        <begin position="60"/>
        <end position="80"/>
    </location>
</feature>
<feature type="transmembrane region" description="Helical" evidence="1">
    <location>
        <begin position="110"/>
        <end position="130"/>
    </location>
</feature>
<accession>A9QYP6</accession>
<reference key="1">
    <citation type="journal article" date="2010" name="J. Bacteriol.">
        <title>Genome sequence of the deep-rooted Yersinia pestis strain Angola reveals new insights into the evolution and pangenome of the plague bacterium.</title>
        <authorList>
            <person name="Eppinger M."/>
            <person name="Worsham P.L."/>
            <person name="Nikolich M.P."/>
            <person name="Riley D.R."/>
            <person name="Sebastian Y."/>
            <person name="Mou S."/>
            <person name="Achtman M."/>
            <person name="Lindler L.E."/>
            <person name="Ravel J."/>
        </authorList>
    </citation>
    <scope>NUCLEOTIDE SEQUENCE [LARGE SCALE GENOMIC DNA]</scope>
    <source>
        <strain>Angola</strain>
    </source>
</reference>
<evidence type="ECO:0000255" key="1">
    <source>
        <dbReference type="HAMAP-Rule" id="MF_00708"/>
    </source>
</evidence>
<organism>
    <name type="scientific">Yersinia pestis bv. Antiqua (strain Angola)</name>
    <dbReference type="NCBI Taxonomy" id="349746"/>
    <lineage>
        <taxon>Bacteria</taxon>
        <taxon>Pseudomonadati</taxon>
        <taxon>Pseudomonadota</taxon>
        <taxon>Gammaproteobacteria</taxon>
        <taxon>Enterobacterales</taxon>
        <taxon>Yersiniaceae</taxon>
        <taxon>Yersinia</taxon>
    </lineage>
</organism>
<name>FRDC_YERPG</name>
<keyword id="KW-0997">Cell inner membrane</keyword>
<keyword id="KW-1003">Cell membrane</keyword>
<keyword id="KW-0472">Membrane</keyword>
<keyword id="KW-0812">Transmembrane</keyword>
<keyword id="KW-1133">Transmembrane helix</keyword>
<comment type="function">
    <text evidence="1">Two distinct, membrane-bound, FAD-containing enzymes are responsible for the catalysis of fumarate and succinate interconversion; fumarate reductase is used in anaerobic growth, and succinate dehydrogenase is used in aerobic growth. Anchors the catalytic components of the fumarate reductase complex to the cell inner membrane, binds quinones.</text>
</comment>
<comment type="subunit">
    <text evidence="1">Part of an enzyme complex containing four subunits: a flavoprotein (FrdA), an iron-sulfur protein (FrdB), and two hydrophobic anchor proteins (FrdC and FrdD).</text>
</comment>
<comment type="subcellular location">
    <subcellularLocation>
        <location evidence="1">Cell inner membrane</location>
        <topology evidence="1">Multi-pass membrane protein</topology>
    </subcellularLocation>
</comment>
<comment type="similarity">
    <text evidence="1">Belongs to the FrdC family.</text>
</comment>
<protein>
    <recommendedName>
        <fullName evidence="1">Fumarate reductase subunit C</fullName>
    </recommendedName>
    <alternativeName>
        <fullName evidence="1">Fumarate reductase 15 kDa hydrophobic protein</fullName>
    </alternativeName>
    <alternativeName>
        <fullName evidence="1">Quinol-fumarate reductase subunit C</fullName>
        <shortName evidence="1">QFR subunit C</shortName>
    </alternativeName>
</protein>